<evidence type="ECO:0000250" key="1"/>
<evidence type="ECO:0000250" key="2">
    <source>
        <dbReference type="UniProtKB" id="P20395"/>
    </source>
</evidence>
<evidence type="ECO:0000255" key="3"/>
<evidence type="ECO:0000255" key="4">
    <source>
        <dbReference type="PROSITE-ProRule" id="PRU00521"/>
    </source>
</evidence>
<evidence type="ECO:0000269" key="5">
    <source>
    </source>
</evidence>
<evidence type="ECO:0000269" key="6">
    <source>
    </source>
</evidence>
<evidence type="ECO:0000269" key="7">
    <source>
    </source>
</evidence>
<evidence type="ECO:0000269" key="8">
    <source>
    </source>
</evidence>
<evidence type="ECO:0000269" key="9">
    <source>
    </source>
</evidence>
<evidence type="ECO:0000269" key="10">
    <source>
    </source>
</evidence>
<evidence type="ECO:0000269" key="11">
    <source>
    </source>
</evidence>
<evidence type="ECO:0000269" key="12">
    <source>
    </source>
</evidence>
<evidence type="ECO:0000269" key="13">
    <source>
    </source>
</evidence>
<evidence type="ECO:0000269" key="14">
    <source>
    </source>
</evidence>
<evidence type="ECO:0000269" key="15">
    <source>
    </source>
</evidence>
<evidence type="ECO:0000269" key="16">
    <source>
    </source>
</evidence>
<evidence type="ECO:0000269" key="17">
    <source>
    </source>
</evidence>
<evidence type="ECO:0000269" key="18">
    <source>
    </source>
</evidence>
<evidence type="ECO:0000269" key="19">
    <source>
    </source>
</evidence>
<evidence type="ECO:0000269" key="20">
    <source>
    </source>
</evidence>
<evidence type="ECO:0000269" key="21">
    <source>
    </source>
</evidence>
<evidence type="ECO:0000269" key="22">
    <source>
    </source>
</evidence>
<evidence type="ECO:0000269" key="23">
    <source>
    </source>
</evidence>
<evidence type="ECO:0000269" key="24">
    <source>
    </source>
</evidence>
<evidence type="ECO:0000269" key="25">
    <source>
    </source>
</evidence>
<evidence type="ECO:0000269" key="26">
    <source>
    </source>
</evidence>
<evidence type="ECO:0000269" key="27">
    <source>
    </source>
</evidence>
<evidence type="ECO:0000269" key="28">
    <source>
    </source>
</evidence>
<evidence type="ECO:0000269" key="29">
    <source>
    </source>
</evidence>
<evidence type="ECO:0000269" key="30">
    <source>
    </source>
</evidence>
<evidence type="ECO:0000269" key="31">
    <source>
    </source>
</evidence>
<evidence type="ECO:0000269" key="32">
    <source>
    </source>
</evidence>
<evidence type="ECO:0000269" key="33">
    <source ref="4"/>
</evidence>
<evidence type="ECO:0000269" key="34">
    <source ref="5"/>
</evidence>
<evidence type="ECO:0000303" key="35">
    <source>
    </source>
</evidence>
<evidence type="ECO:0000303" key="36">
    <source>
    </source>
</evidence>
<evidence type="ECO:0000305" key="37"/>
<evidence type="ECO:0000305" key="38">
    <source>
    </source>
</evidence>
<evidence type="ECO:0007744" key="39">
    <source>
        <dbReference type="PDB" id="4MQW"/>
    </source>
</evidence>
<evidence type="ECO:0007829" key="40">
    <source>
        <dbReference type="PDB" id="4AY9"/>
    </source>
</evidence>
<evidence type="ECO:0007829" key="41">
    <source>
        <dbReference type="PDB" id="4MQW"/>
    </source>
</evidence>
<evidence type="ECO:0007829" key="42">
    <source>
        <dbReference type="PDB" id="8I2G"/>
    </source>
</evidence>
<proteinExistence type="evidence at protein level"/>
<comment type="function">
    <text evidence="7 24 25">G protein-coupled receptor for follitropin, the follicle-stimulating hormone (PubMed:11847099, PubMed:24058690, PubMed:24692546). Through cAMP production activates the downstream PI3K-AKT and ERK1/ERK2 signaling pathways (PubMed:24058690).</text>
</comment>
<comment type="subunit">
    <text evidence="2 22 25">Homotrimer. Functions as a homotrimer binding the FSH hormone heterodimer composed of CGA and FSHB (PubMed:24692546). Interacts with ARRB2 (By similarity). Interacts with APPL2; interaction is independent of follicle stimulating hormone stimulation (PubMed:17030088).</text>
</comment>
<comment type="interaction">
    <interactant intactId="EBI-848239">
        <id>P23945</id>
    </interactant>
    <interactant intactId="EBI-359854">
        <id>P27348</id>
        <label>YWHAQ</label>
    </interactant>
    <organismsDiffer>false</organismsDiffer>
    <experiments>4</experiments>
</comment>
<comment type="subcellular location">
    <subcellularLocation>
        <location evidence="7 25">Cell membrane</location>
        <topology evidence="37">Multi-pass membrane protein</topology>
    </subcellularLocation>
</comment>
<comment type="alternative products">
    <event type="alternative splicing"/>
    <isoform>
        <id>P23945-1</id>
        <name>Long</name>
        <name>R1</name>
        <sequence type="displayed"/>
    </isoform>
    <isoform>
        <id>P23945-2</id>
        <name>Short</name>
        <name>E9Del</name>
        <sequence type="described" ref="VSP_001953"/>
    </isoform>
    <isoform>
        <id>P23945-3</id>
        <name>3</name>
        <name>E6Del</name>
        <sequence type="described" ref="VSP_043181"/>
    </isoform>
    <isoform>
        <id>P23945-4</id>
        <name>4</name>
        <name>E8'Inc</name>
        <sequence type="described" ref="VSP_053411"/>
    </isoform>
</comment>
<comment type="tissue specificity">
    <text>Sertoli cells and ovarian granulosa cells.</text>
</comment>
<comment type="PTM">
    <text evidence="7">Sulfated.</text>
</comment>
<comment type="PTM">
    <text evidence="2">N-glycosylated; indirectly required for FSH-binding, possibly via a conformational change that allows high affinity binding of hormone.</text>
</comment>
<comment type="disease" evidence="6 8 10 11 27 31 32">
    <disease id="DI-02115">
        <name>Ovarian dysgenesis 1</name>
        <acronym>ODG1</acronym>
        <description>An autosomal recessive disease characterized by primary amenorrhea, variable development of secondary sex characteristics, poorly developed streak ovaries, and high serum levels of follicle-stimulating hormone (FSH) and luteinizing hormone (LH).</description>
        <dbReference type="MIM" id="233300"/>
    </disease>
    <text>The disease is caused by variants affecting the gene represented in this entry.</text>
</comment>
<comment type="disease" evidence="12 13 18 21 23 24 26">
    <disease id="DI-02117">
        <name>Ovarian hyperstimulation syndrome</name>
        <acronym>OHSS</acronym>
        <description>Disorder which occurs either spontaneously or most often as an iatrogenic complication of ovarian stimulation treatments for in vitro fertilization. The clinical manifestations vary from abdominal distention and discomfort to potentially life-threatening, massive ovarian enlargement and capillary leak with fluid sequestration. Pathologic features of this syndrome include the presence of multiple serous and hemorrhagic follicular cysts lined by luteinized cells, a condition called hyperreactio luteinalis.</description>
        <dbReference type="MIM" id="608115"/>
    </disease>
    <text>The disease is caused by variants affecting the gene represented in this entry.</text>
</comment>
<comment type="similarity">
    <text evidence="4">Belongs to the G-protein coupled receptor 1 family. FSH/LSH/TSH subfamily.</text>
</comment>
<dbReference type="EMBL" id="M65085">
    <property type="protein sequence ID" value="AAA52477.1"/>
    <property type="molecule type" value="mRNA"/>
</dbReference>
<dbReference type="EMBL" id="M95489">
    <property type="protein sequence ID" value="AAA52478.1"/>
    <property type="molecule type" value="mRNA"/>
</dbReference>
<dbReference type="EMBL" id="S59900">
    <property type="protein sequence ID" value="AAB26480.1"/>
    <property type="molecule type" value="mRNA"/>
</dbReference>
<dbReference type="EMBL" id="JN003607">
    <property type="protein sequence ID" value="AEI86722.1"/>
    <property type="molecule type" value="mRNA"/>
</dbReference>
<dbReference type="EMBL" id="AY429104">
    <property type="protein sequence ID" value="AAR07899.1"/>
    <property type="molecule type" value="mRNA"/>
</dbReference>
<dbReference type="EMBL" id="AK292562">
    <property type="protein sequence ID" value="BAF85251.1"/>
    <property type="molecule type" value="mRNA"/>
</dbReference>
<dbReference type="EMBL" id="AC007189">
    <property type="status" value="NOT_ANNOTATED_CDS"/>
    <property type="molecule type" value="Genomic_DNA"/>
</dbReference>
<dbReference type="EMBL" id="AC079394">
    <property type="status" value="NOT_ANNOTATED_CDS"/>
    <property type="molecule type" value="Genomic_DNA"/>
</dbReference>
<dbReference type="EMBL" id="AC092533">
    <property type="status" value="NOT_ANNOTATED_CDS"/>
    <property type="molecule type" value="Genomic_DNA"/>
</dbReference>
<dbReference type="EMBL" id="CH471053">
    <property type="protein sequence ID" value="EAX00188.1"/>
    <property type="molecule type" value="Genomic_DNA"/>
</dbReference>
<dbReference type="EMBL" id="CH471053">
    <property type="protein sequence ID" value="EAX00189.1"/>
    <property type="molecule type" value="Genomic_DNA"/>
</dbReference>
<dbReference type="EMBL" id="BC096831">
    <property type="protein sequence ID" value="AAH96831.1"/>
    <property type="molecule type" value="mRNA"/>
</dbReference>
<dbReference type="EMBL" id="BC118548">
    <property type="protein sequence ID" value="AAI18549.1"/>
    <property type="molecule type" value="mRNA"/>
</dbReference>
<dbReference type="EMBL" id="BC125270">
    <property type="protein sequence ID" value="AAI25271.1"/>
    <property type="molecule type" value="mRNA"/>
</dbReference>
<dbReference type="EMBL" id="X68044">
    <property type="protein sequence ID" value="CAA48179.1"/>
    <property type="molecule type" value="mRNA"/>
</dbReference>
<dbReference type="EMBL" id="S73199">
    <property type="protein sequence ID" value="AAB32071.1"/>
    <property type="molecule type" value="Genomic_DNA"/>
</dbReference>
<dbReference type="EMBL" id="S73526">
    <property type="protein sequence ID" value="AAB32225.1"/>
    <property type="molecule type" value="Genomic_DNA"/>
</dbReference>
<dbReference type="CCDS" id="CCDS1843.1">
    <molecule id="P23945-1"/>
</dbReference>
<dbReference type="CCDS" id="CCDS1844.2">
    <molecule id="P23945-3"/>
</dbReference>
<dbReference type="PIR" id="I57661">
    <property type="entry name" value="QRHUFT"/>
</dbReference>
<dbReference type="RefSeq" id="NP_000136.2">
    <molecule id="P23945-1"/>
    <property type="nucleotide sequence ID" value="NM_000145.3"/>
</dbReference>
<dbReference type="RefSeq" id="NP_852111.2">
    <molecule id="P23945-3"/>
    <property type="nucleotide sequence ID" value="NM_181446.3"/>
</dbReference>
<dbReference type="RefSeq" id="XP_011531035.1">
    <molecule id="P23945-4"/>
    <property type="nucleotide sequence ID" value="XM_011532733.3"/>
</dbReference>
<dbReference type="PDB" id="1XWD">
    <property type="method" value="X-ray"/>
    <property type="resolution" value="2.92 A"/>
    <property type="chains" value="C/F=17-268"/>
</dbReference>
<dbReference type="PDB" id="4AY9">
    <property type="method" value="X-ray"/>
    <property type="resolution" value="2.50 A"/>
    <property type="chains" value="X/Y/Z=17-366"/>
</dbReference>
<dbReference type="PDB" id="4MQW">
    <property type="method" value="X-ray"/>
    <property type="resolution" value="2.90 A"/>
    <property type="chains" value="X/Y/Z=16-366"/>
</dbReference>
<dbReference type="PDB" id="8I2G">
    <property type="method" value="EM"/>
    <property type="resolution" value="2.80 A"/>
    <property type="chains" value="R=18-695"/>
</dbReference>
<dbReference type="PDB" id="8I2H">
    <property type="method" value="EM"/>
    <property type="resolution" value="6.00 A"/>
    <property type="chains" value="A=14-695"/>
</dbReference>
<dbReference type="PDBsum" id="1XWD"/>
<dbReference type="PDBsum" id="4AY9"/>
<dbReference type="PDBsum" id="4MQW"/>
<dbReference type="PDBsum" id="8I2G"/>
<dbReference type="PDBsum" id="8I2H"/>
<dbReference type="EMDB" id="EMD-35135"/>
<dbReference type="EMDB" id="EMD-35136"/>
<dbReference type="SMR" id="P23945"/>
<dbReference type="BioGRID" id="108770">
    <property type="interactions" value="36"/>
</dbReference>
<dbReference type="CORUM" id="P23945"/>
<dbReference type="DIP" id="DIP-35605N"/>
<dbReference type="FunCoup" id="P23945">
    <property type="interactions" value="556"/>
</dbReference>
<dbReference type="IntAct" id="P23945">
    <property type="interactions" value="22"/>
</dbReference>
<dbReference type="MINT" id="P23945"/>
<dbReference type="STRING" id="9606.ENSP00000384708"/>
<dbReference type="BindingDB" id="P23945"/>
<dbReference type="ChEMBL" id="CHEMBL2024"/>
<dbReference type="DrugBank" id="DB00097">
    <property type="generic name" value="Choriogonadotropin alfa"/>
</dbReference>
<dbReference type="DrugBank" id="DB09066">
    <property type="generic name" value="Corifollitropin alfa"/>
</dbReference>
<dbReference type="DrugBank" id="DB00066">
    <property type="generic name" value="Follitropin"/>
</dbReference>
<dbReference type="DrugBank" id="DB00032">
    <property type="generic name" value="Menotropins"/>
</dbReference>
<dbReference type="DrugBank" id="DB04786">
    <property type="generic name" value="Suramin"/>
</dbReference>
<dbReference type="DrugBank" id="DB00094">
    <property type="generic name" value="Urofollitropin"/>
</dbReference>
<dbReference type="DrugCentral" id="P23945"/>
<dbReference type="GuidetoPHARMACOLOGY" id="253"/>
<dbReference type="TCDB" id="9.A.14.1.5">
    <property type="family name" value="the g-protein-coupled receptor (gpcr) family"/>
</dbReference>
<dbReference type="GlyCosmos" id="P23945">
    <property type="glycosylation" value="4 sites, No reported glycans"/>
</dbReference>
<dbReference type="GlyGen" id="P23945">
    <property type="glycosylation" value="4 sites"/>
</dbReference>
<dbReference type="iPTMnet" id="P23945"/>
<dbReference type="PhosphoSitePlus" id="P23945"/>
<dbReference type="BioMuta" id="FSHR"/>
<dbReference type="DMDM" id="311033420"/>
<dbReference type="MassIVE" id="P23945"/>
<dbReference type="PaxDb" id="9606-ENSP00000384708"/>
<dbReference type="PeptideAtlas" id="P23945"/>
<dbReference type="Antibodypedia" id="15300">
    <property type="antibodies" value="686 antibodies from 37 providers"/>
</dbReference>
<dbReference type="DNASU" id="2492"/>
<dbReference type="Ensembl" id="ENST00000304421.8">
    <molecule id="P23945-3"/>
    <property type="protein sequence ID" value="ENSP00000306780.4"/>
    <property type="gene ID" value="ENSG00000170820.12"/>
</dbReference>
<dbReference type="Ensembl" id="ENST00000406846.7">
    <molecule id="P23945-1"/>
    <property type="protein sequence ID" value="ENSP00000384708.2"/>
    <property type="gene ID" value="ENSG00000170820.12"/>
</dbReference>
<dbReference type="GeneID" id="2492"/>
<dbReference type="KEGG" id="hsa:2492"/>
<dbReference type="MANE-Select" id="ENST00000406846.7">
    <property type="protein sequence ID" value="ENSP00000384708.2"/>
    <property type="RefSeq nucleotide sequence ID" value="NM_000145.4"/>
    <property type="RefSeq protein sequence ID" value="NP_000136.2"/>
</dbReference>
<dbReference type="UCSC" id="uc002rww.4">
    <property type="organism name" value="human"/>
</dbReference>
<dbReference type="UCSC" id="uc010fbn.4">
    <molecule id="P23945-1"/>
    <property type="organism name" value="human"/>
</dbReference>
<dbReference type="AGR" id="HGNC:3969"/>
<dbReference type="CTD" id="2492"/>
<dbReference type="DisGeNET" id="2492"/>
<dbReference type="GeneCards" id="FSHR"/>
<dbReference type="HGNC" id="HGNC:3969">
    <property type="gene designation" value="FSHR"/>
</dbReference>
<dbReference type="HPA" id="ENSG00000170820">
    <property type="expression patterns" value="Group enriched (ovary, testis)"/>
</dbReference>
<dbReference type="MalaCards" id="FSHR"/>
<dbReference type="MIM" id="136435">
    <property type="type" value="gene"/>
</dbReference>
<dbReference type="MIM" id="233300">
    <property type="type" value="phenotype"/>
</dbReference>
<dbReference type="MIM" id="608115">
    <property type="type" value="phenotype"/>
</dbReference>
<dbReference type="neXtProt" id="NX_P23945"/>
<dbReference type="OpenTargets" id="ENSG00000170820"/>
<dbReference type="Orphanet" id="243">
    <property type="disease" value="46,XX gonadal dysgenesis"/>
</dbReference>
<dbReference type="Orphanet" id="64739">
    <property type="disease" value="Ovarian hyperstimulation syndrome"/>
</dbReference>
<dbReference type="PharmGKB" id="PA28386"/>
<dbReference type="VEuPathDB" id="HostDB:ENSG00000170820"/>
<dbReference type="eggNOG" id="KOG2087">
    <property type="taxonomic scope" value="Eukaryota"/>
</dbReference>
<dbReference type="GeneTree" id="ENSGT00940000158952"/>
<dbReference type="HOGENOM" id="CLU_006130_1_1_1"/>
<dbReference type="InParanoid" id="P23945"/>
<dbReference type="OMA" id="FINFSCG"/>
<dbReference type="OrthoDB" id="5981530at2759"/>
<dbReference type="PAN-GO" id="P23945">
    <property type="GO annotations" value="8 GO annotations based on evolutionary models"/>
</dbReference>
<dbReference type="PhylomeDB" id="P23945"/>
<dbReference type="TreeFam" id="TF316814"/>
<dbReference type="PathwayCommons" id="P23945"/>
<dbReference type="Reactome" id="R-HSA-375281">
    <property type="pathway name" value="Hormone ligand-binding receptors"/>
</dbReference>
<dbReference type="Reactome" id="R-HSA-418555">
    <property type="pathway name" value="G alpha (s) signalling events"/>
</dbReference>
<dbReference type="SignaLink" id="P23945"/>
<dbReference type="SIGNOR" id="P23945"/>
<dbReference type="BioGRID-ORCS" id="2492">
    <property type="hits" value="13 hits in 1153 CRISPR screens"/>
</dbReference>
<dbReference type="ChiTaRS" id="FSHR">
    <property type="organism name" value="human"/>
</dbReference>
<dbReference type="EvolutionaryTrace" id="P23945"/>
<dbReference type="GeneWiki" id="Follicle-stimulating_hormone_receptor"/>
<dbReference type="GenomeRNAi" id="2492"/>
<dbReference type="Pharos" id="P23945">
    <property type="development level" value="Tclin"/>
</dbReference>
<dbReference type="PRO" id="PR:P23945"/>
<dbReference type="Proteomes" id="UP000005640">
    <property type="component" value="Chromosome 2"/>
</dbReference>
<dbReference type="RNAct" id="P23945">
    <property type="molecule type" value="protein"/>
</dbReference>
<dbReference type="Bgee" id="ENSG00000170820">
    <property type="expression patterns" value="Expressed in male germ line stem cell (sensu Vertebrata) in testis and 72 other cell types or tissues"/>
</dbReference>
<dbReference type="ExpressionAtlas" id="P23945">
    <property type="expression patterns" value="baseline and differential"/>
</dbReference>
<dbReference type="GO" id="GO:0009986">
    <property type="term" value="C:cell surface"/>
    <property type="evidence" value="ECO:0007669"/>
    <property type="project" value="Ensembl"/>
</dbReference>
<dbReference type="GO" id="GO:0005768">
    <property type="term" value="C:endosome"/>
    <property type="evidence" value="ECO:0007669"/>
    <property type="project" value="Ensembl"/>
</dbReference>
<dbReference type="GO" id="GO:0016020">
    <property type="term" value="C:membrane"/>
    <property type="evidence" value="ECO:0000314"/>
    <property type="project" value="UniProtKB"/>
</dbReference>
<dbReference type="GO" id="GO:0005886">
    <property type="term" value="C:plasma membrane"/>
    <property type="evidence" value="ECO:0000314"/>
    <property type="project" value="UniProtKB"/>
</dbReference>
<dbReference type="GO" id="GO:0043235">
    <property type="term" value="C:receptor complex"/>
    <property type="evidence" value="ECO:0000314"/>
    <property type="project" value="UniProtKB"/>
</dbReference>
<dbReference type="GO" id="GO:0004963">
    <property type="term" value="F:follicle-stimulating hormone receptor activity"/>
    <property type="evidence" value="ECO:0000314"/>
    <property type="project" value="UniProtKB"/>
</dbReference>
<dbReference type="GO" id="GO:0008528">
    <property type="term" value="F:G protein-coupled peptide receptor activity"/>
    <property type="evidence" value="ECO:0000318"/>
    <property type="project" value="GO_Central"/>
</dbReference>
<dbReference type="GO" id="GO:0017046">
    <property type="term" value="F:peptide hormone binding"/>
    <property type="evidence" value="ECO:0007669"/>
    <property type="project" value="Ensembl"/>
</dbReference>
<dbReference type="GO" id="GO:0007189">
    <property type="term" value="P:adenylate cyclase-activating G protein-coupled receptor signaling pathway"/>
    <property type="evidence" value="ECO:0000318"/>
    <property type="project" value="GO_Central"/>
</dbReference>
<dbReference type="GO" id="GO:0007193">
    <property type="term" value="P:adenylate cyclase-inhibiting G protein-coupled receptor signaling pathway"/>
    <property type="evidence" value="ECO:0007669"/>
    <property type="project" value="Ensembl"/>
</dbReference>
<dbReference type="GO" id="GO:0071711">
    <property type="term" value="P:basement membrane organization"/>
    <property type="evidence" value="ECO:0007669"/>
    <property type="project" value="Ensembl"/>
</dbReference>
<dbReference type="GO" id="GO:0071372">
    <property type="term" value="P:cellular response to follicle-stimulating hormone stimulus"/>
    <property type="evidence" value="ECO:0000315"/>
    <property type="project" value="UniProtKB"/>
</dbReference>
<dbReference type="GO" id="GO:0007292">
    <property type="term" value="P:female gamete generation"/>
    <property type="evidence" value="ECO:0000304"/>
    <property type="project" value="ProtInc"/>
</dbReference>
<dbReference type="GO" id="GO:0008585">
    <property type="term" value="P:female gonad development"/>
    <property type="evidence" value="ECO:0000304"/>
    <property type="project" value="ProtInc"/>
</dbReference>
<dbReference type="GO" id="GO:0042699">
    <property type="term" value="P:follicle-stimulating hormone signaling pathway"/>
    <property type="evidence" value="ECO:0000314"/>
    <property type="project" value="UniProtKB"/>
</dbReference>
<dbReference type="GO" id="GO:0007186">
    <property type="term" value="P:G protein-coupled receptor signaling pathway"/>
    <property type="evidence" value="ECO:0000314"/>
    <property type="project" value="UniProtKB"/>
</dbReference>
<dbReference type="GO" id="GO:0008406">
    <property type="term" value="P:gonad development"/>
    <property type="evidence" value="ECO:0000304"/>
    <property type="project" value="ProtInc"/>
</dbReference>
<dbReference type="GO" id="GO:0009755">
    <property type="term" value="P:hormone-mediated signaling pathway"/>
    <property type="evidence" value="ECO:0000318"/>
    <property type="project" value="GO_Central"/>
</dbReference>
<dbReference type="GO" id="GO:0009992">
    <property type="term" value="P:intracellular water homeostasis"/>
    <property type="evidence" value="ECO:0007669"/>
    <property type="project" value="Ensembl"/>
</dbReference>
<dbReference type="GO" id="GO:0007626">
    <property type="term" value="P:locomotory behavior"/>
    <property type="evidence" value="ECO:0007669"/>
    <property type="project" value="Ensembl"/>
</dbReference>
<dbReference type="GO" id="GO:0008584">
    <property type="term" value="P:male gonad development"/>
    <property type="evidence" value="ECO:0000270"/>
    <property type="project" value="UniProtKB"/>
</dbReference>
<dbReference type="GO" id="GO:0045779">
    <property type="term" value="P:negative regulation of bone resorption"/>
    <property type="evidence" value="ECO:0007669"/>
    <property type="project" value="Ensembl"/>
</dbReference>
<dbReference type="GO" id="GO:0031175">
    <property type="term" value="P:neuron projection development"/>
    <property type="evidence" value="ECO:0007669"/>
    <property type="project" value="Ensembl"/>
</dbReference>
<dbReference type="GO" id="GO:0007200">
    <property type="term" value="P:phospholipase C-activating G protein-coupled receptor signaling pathway"/>
    <property type="evidence" value="ECO:0007669"/>
    <property type="project" value="Ensembl"/>
</dbReference>
<dbReference type="GO" id="GO:0070374">
    <property type="term" value="P:positive regulation of ERK1 and ERK2 cascade"/>
    <property type="evidence" value="ECO:0000314"/>
    <property type="project" value="UniProtKB"/>
</dbReference>
<dbReference type="GO" id="GO:0033148">
    <property type="term" value="P:positive regulation of intracellular estrogen receptor signaling pathway"/>
    <property type="evidence" value="ECO:0007669"/>
    <property type="project" value="Ensembl"/>
</dbReference>
<dbReference type="GO" id="GO:0051897">
    <property type="term" value="P:positive regulation of phosphatidylinositol 3-kinase/protein kinase B signal transduction"/>
    <property type="evidence" value="ECO:0000315"/>
    <property type="project" value="UniProtKB"/>
</dbReference>
<dbReference type="GO" id="GO:0001545">
    <property type="term" value="P:primary ovarian follicle growth"/>
    <property type="evidence" value="ECO:0007669"/>
    <property type="project" value="Ensembl"/>
</dbReference>
<dbReference type="GO" id="GO:0060408">
    <property type="term" value="P:regulation of acetylcholine metabolic process"/>
    <property type="evidence" value="ECO:0007669"/>
    <property type="project" value="Ensembl"/>
</dbReference>
<dbReference type="GO" id="GO:0033044">
    <property type="term" value="P:regulation of chromosome organization"/>
    <property type="evidence" value="ECO:0007669"/>
    <property type="project" value="Ensembl"/>
</dbReference>
<dbReference type="GO" id="GO:0032350">
    <property type="term" value="P:regulation of hormone metabolic process"/>
    <property type="evidence" value="ECO:0007669"/>
    <property type="project" value="Ensembl"/>
</dbReference>
<dbReference type="GO" id="GO:0045670">
    <property type="term" value="P:regulation of osteoclast differentiation"/>
    <property type="evidence" value="ECO:0007669"/>
    <property type="project" value="Ensembl"/>
</dbReference>
<dbReference type="GO" id="GO:0010640">
    <property type="term" value="P:regulation of platelet-derived growth factor receptor signaling pathway"/>
    <property type="evidence" value="ECO:0007669"/>
    <property type="project" value="Ensembl"/>
</dbReference>
<dbReference type="GO" id="GO:0010738">
    <property type="term" value="P:regulation of protein kinase A signaling"/>
    <property type="evidence" value="ECO:0000315"/>
    <property type="project" value="UniProtKB"/>
</dbReference>
<dbReference type="GO" id="GO:0003073">
    <property type="term" value="P:regulation of systemic arterial blood pressure"/>
    <property type="evidence" value="ECO:0007669"/>
    <property type="project" value="Ensembl"/>
</dbReference>
<dbReference type="GO" id="GO:0060009">
    <property type="term" value="P:Sertoli cell development"/>
    <property type="evidence" value="ECO:0007669"/>
    <property type="project" value="Ensembl"/>
</dbReference>
<dbReference type="GO" id="GO:0060011">
    <property type="term" value="P:Sertoli cell proliferation"/>
    <property type="evidence" value="ECO:0007669"/>
    <property type="project" value="Ensembl"/>
</dbReference>
<dbReference type="GO" id="GO:0035092">
    <property type="term" value="P:sperm DNA condensation"/>
    <property type="evidence" value="ECO:0007669"/>
    <property type="project" value="Ensembl"/>
</dbReference>
<dbReference type="GO" id="GO:0007283">
    <property type="term" value="P:spermatogenesis"/>
    <property type="evidence" value="ECO:0000304"/>
    <property type="project" value="ProtInc"/>
</dbReference>
<dbReference type="GO" id="GO:0045056">
    <property type="term" value="P:transcytosis"/>
    <property type="evidence" value="ECO:0007669"/>
    <property type="project" value="Ensembl"/>
</dbReference>
<dbReference type="GO" id="GO:0060065">
    <property type="term" value="P:uterus development"/>
    <property type="evidence" value="ECO:0007669"/>
    <property type="project" value="Ensembl"/>
</dbReference>
<dbReference type="CDD" id="cd15360">
    <property type="entry name" value="7tmA_FSH-R"/>
    <property type="match status" value="1"/>
</dbReference>
<dbReference type="FunFam" id="1.20.1070.10:FF:000019">
    <property type="entry name" value="Lutropin-choriogonadotropic hormone receptor"/>
    <property type="match status" value="1"/>
</dbReference>
<dbReference type="Gene3D" id="1.20.1070.10">
    <property type="entry name" value="Rhodopsin 7-helix transmembrane proteins"/>
    <property type="match status" value="1"/>
</dbReference>
<dbReference type="Gene3D" id="3.80.10.10">
    <property type="entry name" value="Ribonuclease Inhibitor"/>
    <property type="match status" value="1"/>
</dbReference>
<dbReference type="InterPro" id="IPR002272">
    <property type="entry name" value="FSH_rcpt"/>
</dbReference>
<dbReference type="InterPro" id="IPR024635">
    <property type="entry name" value="GnHR_TM"/>
</dbReference>
<dbReference type="InterPro" id="IPR000276">
    <property type="entry name" value="GPCR_Rhodpsn"/>
</dbReference>
<dbReference type="InterPro" id="IPR017452">
    <property type="entry name" value="GPCR_Rhodpsn_7TM"/>
</dbReference>
<dbReference type="InterPro" id="IPR002131">
    <property type="entry name" value="Gphrmn_rcpt_fam"/>
</dbReference>
<dbReference type="InterPro" id="IPR026906">
    <property type="entry name" value="LRR_5"/>
</dbReference>
<dbReference type="InterPro" id="IPR032675">
    <property type="entry name" value="LRR_dom_sf"/>
</dbReference>
<dbReference type="InterPro" id="IPR000372">
    <property type="entry name" value="LRRNT"/>
</dbReference>
<dbReference type="PANTHER" id="PTHR24372:SF5">
    <property type="entry name" value="FOLLICLE-STIMULATING HORMONE RECEPTOR"/>
    <property type="match status" value="1"/>
</dbReference>
<dbReference type="PANTHER" id="PTHR24372">
    <property type="entry name" value="GLYCOPROTEIN HORMONE RECEPTOR"/>
    <property type="match status" value="1"/>
</dbReference>
<dbReference type="Pfam" id="PF00001">
    <property type="entry name" value="7tm_1"/>
    <property type="match status" value="1"/>
</dbReference>
<dbReference type="Pfam" id="PF12369">
    <property type="entry name" value="GnHR_trans"/>
    <property type="match status" value="1"/>
</dbReference>
<dbReference type="Pfam" id="PF13306">
    <property type="entry name" value="LRR_5"/>
    <property type="match status" value="2"/>
</dbReference>
<dbReference type="Pfam" id="PF01462">
    <property type="entry name" value="LRRNT"/>
    <property type="match status" value="1"/>
</dbReference>
<dbReference type="PRINTS" id="PR01143">
    <property type="entry name" value="FSHRECEPTOR"/>
</dbReference>
<dbReference type="PRINTS" id="PR00373">
    <property type="entry name" value="GLYCHORMONER"/>
</dbReference>
<dbReference type="PRINTS" id="PR00237">
    <property type="entry name" value="GPCRRHODOPSN"/>
</dbReference>
<dbReference type="SMART" id="SM00013">
    <property type="entry name" value="LRRNT"/>
    <property type="match status" value="1"/>
</dbReference>
<dbReference type="SUPFAM" id="SSF81321">
    <property type="entry name" value="Family A G protein-coupled receptor-like"/>
    <property type="match status" value="1"/>
</dbReference>
<dbReference type="SUPFAM" id="SSF52058">
    <property type="entry name" value="L domain-like"/>
    <property type="match status" value="1"/>
</dbReference>
<dbReference type="PROSITE" id="PS00237">
    <property type="entry name" value="G_PROTEIN_RECEP_F1_1"/>
    <property type="match status" value="1"/>
</dbReference>
<dbReference type="PROSITE" id="PS50262">
    <property type="entry name" value="G_PROTEIN_RECEP_F1_2"/>
    <property type="match status" value="1"/>
</dbReference>
<feature type="signal peptide" evidence="3">
    <location>
        <begin position="1"/>
        <end position="17"/>
    </location>
</feature>
<feature type="chain" id="PRO_0000012771" description="Follicle-stimulating hormone receptor">
    <location>
        <begin position="18"/>
        <end position="695"/>
    </location>
</feature>
<feature type="topological domain" description="Extracellular" evidence="3">
    <location>
        <begin position="18"/>
        <end position="366"/>
    </location>
</feature>
<feature type="transmembrane region" description="Helical; Name=1" evidence="3">
    <location>
        <begin position="367"/>
        <end position="387"/>
    </location>
</feature>
<feature type="topological domain" description="Cytoplasmic" evidence="3">
    <location>
        <begin position="388"/>
        <end position="398"/>
    </location>
</feature>
<feature type="transmembrane region" description="Helical; Name=2" evidence="3">
    <location>
        <begin position="399"/>
        <end position="421"/>
    </location>
</feature>
<feature type="topological domain" description="Extracellular" evidence="3">
    <location>
        <begin position="422"/>
        <end position="443"/>
    </location>
</feature>
<feature type="transmembrane region" description="Helical; Name=3" evidence="3">
    <location>
        <begin position="444"/>
        <end position="465"/>
    </location>
</feature>
<feature type="topological domain" description="Cytoplasmic" evidence="3">
    <location>
        <begin position="466"/>
        <end position="485"/>
    </location>
</feature>
<feature type="transmembrane region" description="Helical; Name=4" evidence="3">
    <location>
        <begin position="486"/>
        <end position="508"/>
    </location>
</feature>
<feature type="topological domain" description="Extracellular" evidence="3">
    <location>
        <begin position="509"/>
        <end position="528"/>
    </location>
</feature>
<feature type="transmembrane region" description="Helical; Name=5" evidence="3">
    <location>
        <begin position="529"/>
        <end position="550"/>
    </location>
</feature>
<feature type="topological domain" description="Cytoplasmic" evidence="3">
    <location>
        <begin position="551"/>
        <end position="573"/>
    </location>
</feature>
<feature type="transmembrane region" description="Helical; Name=6" evidence="3">
    <location>
        <begin position="574"/>
        <end position="597"/>
    </location>
</feature>
<feature type="topological domain" description="Extracellular" evidence="3">
    <location>
        <begin position="598"/>
        <end position="608"/>
    </location>
</feature>
<feature type="transmembrane region" description="Helical; Name=7" evidence="3">
    <location>
        <begin position="609"/>
        <end position="630"/>
    </location>
</feature>
<feature type="topological domain" description="Cytoplasmic" evidence="3">
    <location>
        <begin position="631"/>
        <end position="695"/>
    </location>
</feature>
<feature type="domain" description="LRRNT">
    <location>
        <begin position="18"/>
        <end position="46"/>
    </location>
</feature>
<feature type="repeat" description="LRR 1">
    <location>
        <begin position="49"/>
        <end position="72"/>
    </location>
</feature>
<feature type="repeat" description="LRR 2">
    <location>
        <begin position="73"/>
        <end position="97"/>
    </location>
</feature>
<feature type="repeat" description="LRR 3">
    <location>
        <begin position="98"/>
        <end position="118"/>
    </location>
</feature>
<feature type="repeat" description="LRR 4">
    <location>
        <begin position="119"/>
        <end position="143"/>
    </location>
</feature>
<feature type="repeat" description="LRR 5">
    <location>
        <begin position="144"/>
        <end position="169"/>
    </location>
</feature>
<feature type="repeat" description="LRR 6">
    <location>
        <begin position="170"/>
        <end position="192"/>
    </location>
</feature>
<feature type="repeat" description="LRR 7">
    <location>
        <begin position="193"/>
        <end position="216"/>
    </location>
</feature>
<feature type="repeat" description="LRR 8">
    <location>
        <begin position="217"/>
        <end position="240"/>
    </location>
</feature>
<feature type="repeat" description="LRR 9">
    <location>
        <begin position="241"/>
        <end position="259"/>
    </location>
</feature>
<feature type="modified residue" description="Sulfotyrosine" evidence="38">
    <location>
        <position position="335"/>
    </location>
</feature>
<feature type="glycosylation site" description="N-linked (GlcNAc...) asparagine" evidence="20 25 39">
    <location>
        <position position="191"/>
    </location>
</feature>
<feature type="glycosylation site" description="N-linked (GlcNAc...) asparagine" evidence="3">
    <location>
        <position position="199"/>
    </location>
</feature>
<feature type="glycosylation site" description="N-linked (GlcNAc...) asparagine" evidence="1">
    <location>
        <position position="293"/>
    </location>
</feature>
<feature type="glycosylation site" description="N-linked (GlcNAc...) asparagine" evidence="3">
    <location>
        <position position="318"/>
    </location>
</feature>
<feature type="disulfide bond" evidence="4 20 25 39">
    <location>
        <begin position="18"/>
        <end position="25"/>
    </location>
</feature>
<feature type="disulfide bond" evidence="4 20 25 39">
    <location>
        <begin position="23"/>
        <end position="32"/>
    </location>
</feature>
<feature type="disulfide bond" evidence="25 39">
    <location>
        <begin position="275"/>
        <end position="346"/>
    </location>
</feature>
<feature type="disulfide bond" evidence="25 39">
    <location>
        <begin position="276"/>
        <end position="356"/>
    </location>
</feature>
<feature type="disulfide bond" evidence="25 39">
    <location>
        <begin position="276"/>
        <end position="292"/>
    </location>
</feature>
<feature type="disulfide bond" evidence="25 39">
    <location>
        <begin position="292"/>
        <end position="338"/>
    </location>
</feature>
<feature type="disulfide bond" evidence="4">
    <location>
        <begin position="442"/>
        <end position="517"/>
    </location>
</feature>
<feature type="splice variant" id="VSP_043181" description="In isoform 3." evidence="36">
    <location>
        <begin position="149"/>
        <end position="174"/>
    </location>
</feature>
<feature type="splice variant" id="VSP_053411" description="In isoform 4." evidence="37">
    <original>L</original>
    <variation>LNRRTRTPTEPNVLLAKYPSGQGVLEEPESLSSSI</variation>
    <location>
        <position position="223"/>
    </location>
</feature>
<feature type="splice variant" id="VSP_001953" description="In isoform Short." evidence="35">
    <location>
        <begin position="224"/>
        <end position="285"/>
    </location>
</feature>
<feature type="sequence variant" id="VAR_039279" description="In OHSS; displays increase in affinity and sensitivity toward hCG and does not show any constitutive activity nor promiscuous activation by TSH; dbSNP:rs121909665." evidence="23">
    <original>S</original>
    <variation>Y</variation>
    <location>
        <position position="128"/>
    </location>
</feature>
<feature type="sequence variant" id="VAR_018045" description="In ODG1; impairs cell surface expression; dbSNP:rs121909659." evidence="31">
    <original>I</original>
    <variation>T</variation>
    <location>
        <position position="160"/>
    </location>
</feature>
<feature type="sequence variant" id="VAR_018046" description="In ODG1; very frequent in the Finnish population; dbSNP:rs121909658." evidence="27 32">
    <original>A</original>
    <variation>V</variation>
    <location>
        <position position="189"/>
    </location>
</feature>
<feature type="sequence variant" id="VAR_039280" description="In ODG1; FSH binding is barely detectable; impaired targeting to the cell membrane; adenylate cyclase stimulation by FSH is 4 +-2% residual activity; dbSNP:rs386833515." evidence="6">
    <original>D</original>
    <variation>V</variation>
    <location>
        <position position="224"/>
    </location>
</feature>
<feature type="sequence variant" id="VAR_013903" description="In dbSNP:rs6165." evidence="5 9 14 15 16 17 19 28 34">
    <original>A</original>
    <variation>T</variation>
    <location>
        <position position="307"/>
    </location>
</feature>
<feature type="sequence variant" id="VAR_039281" description="In ODG1; dbSNP:rs386833510." evidence="10">
    <original>P</original>
    <variation>R</variation>
    <location>
        <position position="348"/>
    </location>
</feature>
<feature type="sequence variant" id="VAR_018047" description="In ODG1; dbSNP:rs121909661." evidence="8">
    <original>A</original>
    <variation>T</variation>
    <location>
        <position position="419"/>
    </location>
</feature>
<feature type="sequence variant" id="VAR_039282" description="In OHSS; increase of receptor sensitivity to both hCG and TSH together with an increase in basal activity; dbSNP:rs121909663." evidence="18">
    <original>T</original>
    <variation>A</variation>
    <location>
        <position position="449"/>
    </location>
</feature>
<feature type="sequence variant" id="VAR_017244" description="In OHSS; dbSNP:rs28928870." evidence="12">
    <original>T</original>
    <variation>I</variation>
    <location>
        <position position="449"/>
    </location>
</feature>
<feature type="sequence variant" id="VAR_074535" description="In OHSS; inhibits activation of PI3K/AKT signaling pathway; reduces cAMP production; no effect on ERK1/2 signaling pathway activation; dbSNP:rs1674315529." evidence="24">
    <original>M</original>
    <variation>I</variation>
    <location>
        <position position="512"/>
    </location>
</feature>
<feature type="sequence variant" id="VAR_074536" description="In OHSS; increases cell surface expression; no effect on hormone binding; increases signaling activity." evidence="26">
    <original>V</original>
    <variation>A</variation>
    <location>
        <position position="514"/>
    </location>
</feature>
<feature type="sequence variant" id="VAR_039283" description="In ODG1; totally impairs adenylate cyclase stimulation in vitro; alters the cell surface targeting of the receptor which remains trapped intracellularly; dbSNP:rs121909662." evidence="11">
    <original>P</original>
    <variation>T</variation>
    <location>
        <position position="519"/>
    </location>
</feature>
<feature type="sequence variant" id="VAR_013904" description="In dbSNP:rs6167." evidence="5">
    <original>S</original>
    <variation>R</variation>
    <location>
        <position position="524"/>
    </location>
</feature>
<feature type="sequence variant" id="VAR_039284" description="In OHSS; displays promiscuous activation by both hCG and TSH together with detectable constitutive activity; dbSNP:rs121909664." evidence="21">
    <original>I</original>
    <variation>T</variation>
    <location>
        <position position="545"/>
    </location>
</feature>
<feature type="sequence variant" id="VAR_039285" description="Activating mutation resulting in 1.5-fold increase in basal cAMP production compared to the wild-type receptor." evidence="29">
    <original>D</original>
    <variation>G</variation>
    <location>
        <position position="567"/>
    </location>
</feature>
<feature type="sequence variant" id="VAR_017245" description="In OHSS; dbSNP:rs28928871." evidence="13">
    <original>D</original>
    <variation>N</variation>
    <location>
        <position position="567"/>
    </location>
</feature>
<feature type="sequence variant" id="VAR_018048" description="In ODG1; alters signal transduction of the receptor; adenylate cyclase stimulation by FSH is 24 +-4% residual activity; dbSNP:rs121909660." evidence="6 31">
    <original>R</original>
    <variation>C</variation>
    <location>
        <position position="573"/>
    </location>
</feature>
<feature type="sequence variant" id="VAR_074537" description="In OHSS; decreases cell surface expression; no effect on hormone binding; increases levels of internalized hormone receptor complex; cAMP levels are similar to basal levels even at high doses of FSH stimulation indicating reduced signaling; dbSNP:rs386833511." evidence="26">
    <original>A</original>
    <variation>V</variation>
    <location>
        <position position="575"/>
    </location>
</feature>
<feature type="sequence variant" id="VAR_018049" description="In ovarian sex cord tumor; loss of function." evidence="30">
    <original>F</original>
    <variation>S</variation>
    <location>
        <position position="591"/>
    </location>
</feature>
<feature type="sequence variant" id="VAR_039286" description="In ODG1; binds FSH with a similar affinity than the wild-type receptor; adenylate cyclase stimulation by FSH is 12 +-3% residual activity; dbSNP:rs386833513." evidence="6">
    <original>L</original>
    <variation>V</variation>
    <location>
        <position position="601"/>
    </location>
</feature>
<feature type="sequence variant" id="VAR_013905" description="In dbSNP:rs6166." evidence="5 9 14 15 17 19 33 34">
    <original>S</original>
    <variation>N</variation>
    <location>
        <position position="680"/>
    </location>
</feature>
<feature type="mutagenesis site" description="No change in intracellular cAMP accumulation." evidence="7">
    <original>Y</original>
    <variation>F</variation>
    <location>
        <position position="330"/>
    </location>
</feature>
<feature type="mutagenesis site" description="Reduces intracellular cAMP accumulation." evidence="7">
    <original>Y</original>
    <variation>F</variation>
    <location>
        <position position="335"/>
    </location>
</feature>
<feature type="sequence conflict" description="In Ref. 10; CAA48179." evidence="37" ref="10">
    <original>S</original>
    <variation>R</variation>
    <location>
        <position position="13"/>
    </location>
</feature>
<feature type="sequence conflict" description="In Ref. 1; AAA52477." evidence="37" ref="1">
    <original>N</original>
    <variation>T</variation>
    <location>
        <position position="112"/>
    </location>
</feature>
<feature type="sequence conflict" description="In Ref. 1; AAA52477." evidence="37" ref="1">
    <original>EL</original>
    <variation>AV</variation>
    <location>
        <begin position="197"/>
        <end position="198"/>
    </location>
</feature>
<feature type="sequence conflict" description="In Ref. 10; CAA48179." evidence="37" ref="10">
    <original>S</original>
    <variation>P</variation>
    <location>
        <position position="295"/>
    </location>
</feature>
<feature type="strand" evidence="40">
    <location>
        <begin position="21"/>
        <end position="26"/>
    </location>
</feature>
<feature type="strand" evidence="40">
    <location>
        <begin position="29"/>
        <end position="34"/>
    </location>
</feature>
<feature type="strand" evidence="40">
    <location>
        <begin position="49"/>
        <end position="55"/>
    </location>
</feature>
<feature type="strand" evidence="40">
    <location>
        <begin position="59"/>
        <end position="61"/>
    </location>
</feature>
<feature type="turn" evidence="42">
    <location>
        <begin position="63"/>
        <end position="68"/>
    </location>
</feature>
<feature type="strand" evidence="40">
    <location>
        <begin position="74"/>
        <end position="78"/>
    </location>
</feature>
<feature type="turn" evidence="41">
    <location>
        <begin position="88"/>
        <end position="90"/>
    </location>
</feature>
<feature type="strand" evidence="40">
    <location>
        <begin position="99"/>
        <end position="105"/>
    </location>
</feature>
<feature type="helix" evidence="42">
    <location>
        <begin position="113"/>
        <end position="115"/>
    </location>
</feature>
<feature type="strand" evidence="40">
    <location>
        <begin position="124"/>
        <end position="130"/>
    </location>
</feature>
<feature type="strand" evidence="40">
    <location>
        <begin position="143"/>
        <end position="145"/>
    </location>
</feature>
<feature type="strand" evidence="40">
    <location>
        <begin position="147"/>
        <end position="153"/>
    </location>
</feature>
<feature type="turn" evidence="42">
    <location>
        <begin position="162"/>
        <end position="167"/>
    </location>
</feature>
<feature type="strand" evidence="40">
    <location>
        <begin position="168"/>
        <end position="171"/>
    </location>
</feature>
<feature type="strand" evidence="40">
    <location>
        <begin position="173"/>
        <end position="176"/>
    </location>
</feature>
<feature type="turn" evidence="42">
    <location>
        <begin position="187"/>
        <end position="192"/>
    </location>
</feature>
<feature type="strand" evidence="40">
    <location>
        <begin position="193"/>
        <end position="199"/>
    </location>
</feature>
<feature type="turn" evidence="40">
    <location>
        <begin position="211"/>
        <end position="216"/>
    </location>
</feature>
<feature type="strand" evidence="40">
    <location>
        <begin position="221"/>
        <end position="224"/>
    </location>
</feature>
<feature type="strand" evidence="40">
    <location>
        <begin position="235"/>
        <end position="237"/>
    </location>
</feature>
<feature type="strand" evidence="40">
    <location>
        <begin position="243"/>
        <end position="245"/>
    </location>
</feature>
<feature type="turn" evidence="40">
    <location>
        <begin position="258"/>
        <end position="260"/>
    </location>
</feature>
<feature type="strand" evidence="40">
    <location>
        <begin position="266"/>
        <end position="268"/>
    </location>
</feature>
<feature type="helix" evidence="40">
    <location>
        <begin position="272"/>
        <end position="280"/>
    </location>
</feature>
<feature type="helix" evidence="42">
    <location>
        <begin position="290"/>
        <end position="293"/>
    </location>
</feature>
<feature type="helix" evidence="42">
    <location>
        <begin position="333"/>
        <end position="335"/>
    </location>
</feature>
<feature type="strand" evidence="40">
    <location>
        <begin position="345"/>
        <end position="348"/>
    </location>
</feature>
<feature type="strand" evidence="41">
    <location>
        <begin position="351"/>
        <end position="353"/>
    </location>
</feature>
<feature type="strand" evidence="42">
    <location>
        <begin position="359"/>
        <end position="362"/>
    </location>
</feature>
<feature type="helix" evidence="42">
    <location>
        <begin position="363"/>
        <end position="389"/>
    </location>
</feature>
<feature type="helix" evidence="42">
    <location>
        <begin position="396"/>
        <end position="424"/>
    </location>
</feature>
<feature type="turn" evidence="42">
    <location>
        <begin position="425"/>
        <end position="427"/>
    </location>
</feature>
<feature type="helix" evidence="42">
    <location>
        <begin position="429"/>
        <end position="438"/>
    </location>
</feature>
<feature type="helix" evidence="42">
    <location>
        <begin position="440"/>
        <end position="472"/>
    </location>
</feature>
<feature type="helix" evidence="42">
    <location>
        <begin position="477"/>
        <end position="479"/>
    </location>
</feature>
<feature type="helix" evidence="42">
    <location>
        <begin position="483"/>
        <end position="502"/>
    </location>
</feature>
<feature type="turn" evidence="42">
    <location>
        <begin position="503"/>
        <end position="507"/>
    </location>
</feature>
<feature type="helix" evidence="42">
    <location>
        <begin position="525"/>
        <end position="556"/>
    </location>
</feature>
<feature type="turn" evidence="42">
    <location>
        <begin position="559"/>
        <end position="561"/>
    </location>
</feature>
<feature type="helix" evidence="42">
    <location>
        <begin position="564"/>
        <end position="596"/>
    </location>
</feature>
<feature type="helix" evidence="42">
    <location>
        <begin position="604"/>
        <end position="614"/>
    </location>
</feature>
<feature type="helix" evidence="42">
    <location>
        <begin position="616"/>
        <end position="626"/>
    </location>
</feature>
<feature type="turn" evidence="42">
    <location>
        <begin position="627"/>
        <end position="629"/>
    </location>
</feature>
<feature type="helix" evidence="42">
    <location>
        <begin position="631"/>
        <end position="643"/>
    </location>
</feature>
<sequence length="695" mass="78238">MALLLVSLLAFLSLGSGCHHRICHCSNRVFLCQESKVTEIPSDLPRNAIELRFVLTKLRVIQKGAFSGFGDLEKIEISQNDVLEVIEADVFSNLPKLHEIRIEKANNLLYINPEAFQNLPNLQYLLISNTGIKHLPDVHKIHSLQKVLLDIQDNINIHTIERNSFVGLSFESVILWLNKNGIQEIHNCAFNGTQLDELNLSDNNNLEELPNDVFHGASGPVILDISRTRIHSLPSYGLENLKKLRARSTYNLKKLPTLEKLVALMEASLTYPSHCCAFANWRRQISELHPICNKSILRQEVDYMTQARGQRSSLAEDNESSYSRGFDMTYTEFDYDLCNEVVDVTCSPKPDAFNPCEDIMGYNILRVLIWFISILAITGNIIVLVILTTSQYKLTVPRFLMCNLAFADLCIGIYLLLIASVDIHTKSQYHNYAIDWQTGAGCDAAGFFTVFASELSVYTLTAITLERWHTITHAMQLDCKVQLRHAASVMVMGWIFAFAAALFPIFGISSYMKVSICLPMDIDSPLSQLYVMSLLVLNVLAFVVICGCYIHIYLTVRNPNIVSSSSDTRIAKRMAMLIFTDFLCMAPISFFAISASLKVPLITVSKAKILLVLFHPINSCANPFLYAIFTKNFRRDFFILLSKCGCYEMQAQIYRTETSSTVHNTHPRNGHCSSAPRVTSGSTYILVPLSHLAQN</sequence>
<accession>P23945</accession>
<accession>A0A0A0MSC5</accession>
<accession>A0A1D5RMN4</accession>
<accession>A8K947</accession>
<accession>G5CBS7</accession>
<accession>G5E967</accession>
<accession>J3KQ00</accession>
<accession>Q05AH0</accession>
<accession>Q16225</accession>
<accession>Q4QRJ3</accession>
<accession>Q4ZFZ2</accession>
<accession>Q53RW2</accession>
<protein>
    <recommendedName>
        <fullName>Follicle-stimulating hormone receptor</fullName>
        <shortName>FSH-R</shortName>
    </recommendedName>
    <alternativeName>
        <fullName>Follitropin receptor</fullName>
    </alternativeName>
</protein>
<keyword id="KW-0002">3D-structure</keyword>
<keyword id="KW-0025">Alternative splicing</keyword>
<keyword id="KW-1003">Cell membrane</keyword>
<keyword id="KW-0225">Disease variant</keyword>
<keyword id="KW-1015">Disulfide bond</keyword>
<keyword id="KW-0297">G-protein coupled receptor</keyword>
<keyword id="KW-0325">Glycoprotein</keyword>
<keyword id="KW-0433">Leucine-rich repeat</keyword>
<keyword id="KW-0472">Membrane</keyword>
<keyword id="KW-0675">Receptor</keyword>
<keyword id="KW-1185">Reference proteome</keyword>
<keyword id="KW-0677">Repeat</keyword>
<keyword id="KW-0732">Signal</keyword>
<keyword id="KW-0765">Sulfation</keyword>
<keyword id="KW-0807">Transducer</keyword>
<keyword id="KW-0812">Transmembrane</keyword>
<keyword id="KW-1133">Transmembrane helix</keyword>
<name>FSHR_HUMAN</name>
<gene>
    <name type="primary">FSHR</name>
    <name type="synonym">LGR1</name>
</gene>
<reference key="1">
    <citation type="journal article" date="1991" name="Biochem. Biophys. Res. Commun.">
        <title>Cloning and sequencing of human FSH receptor cDNA.</title>
        <authorList>
            <person name="Minegish T."/>
            <person name="Nakamura K."/>
            <person name="Takakura Y."/>
            <person name="Ibuki Y."/>
            <person name="Igarashi M."/>
        </authorList>
    </citation>
    <scope>NUCLEOTIDE SEQUENCE [MRNA] (ISOFORM LONG)</scope>
    <source>
        <tissue>Ovary</tissue>
    </source>
</reference>
<reference key="2">
    <citation type="journal article" date="1992" name="Endocrinology">
        <title>Expression of recombinant human follicle-stimulating hormone receptor: species-specific ligand binding, signal transduction, and identification of multiple ovarian messenger ribonucleic acid transcripts.</title>
        <authorList>
            <person name="Tilly J.L."/>
            <person name="Aihara T."/>
            <person name="Nishimori K."/>
            <person name="Jia X.-C."/>
            <person name="Billig H."/>
            <person name="Kowalski K.I."/>
            <person name="Perlas E.A."/>
            <person name="Hsueh A.J."/>
        </authorList>
    </citation>
    <scope>NUCLEOTIDE SEQUENCE [MRNA] (ISOFORM LONG)</scope>
    <scope>VARIANTS THR-307 AND ASN-680</scope>
</reference>
<reference key="3">
    <citation type="journal article" date="1992" name="Mol. Cell. Endocrinol.">
        <title>The cloning of the human follicle stimulating hormone receptor and its expression in COS-7, CHO, and Y-1 cells.</title>
        <authorList>
            <person name="Kelton C.A."/>
            <person name="Cheng S.V."/>
            <person name="Nugent N.P."/>
            <person name="Schweickhardt R.L."/>
            <person name="Rosenthal J.L."/>
            <person name="Overton S.A."/>
            <person name="Wands G.D."/>
            <person name="Kuzeja J.B."/>
            <person name="Luchette C.A."/>
            <person name="Chappel S.C."/>
        </authorList>
    </citation>
    <scope>NUCLEOTIDE SEQUENCE [MRNA] (ISOFORM LONG)</scope>
    <scope>VARIANTS THR-307 AND ASN-680</scope>
    <source>
        <tissue>Testis</tissue>
    </source>
</reference>
<reference key="4">
    <citation type="submission" date="2011-05" db="EMBL/GenBank/DDBJ databases">
        <title>FSHR expression in adipose tissue.</title>
        <authorList>
            <person name="Liu X."/>
            <person name="Huang H."/>
            <person name="Sheng J."/>
        </authorList>
    </citation>
    <scope>NUCLEOTIDE SEQUENCE [MRNA] (ISOFORM LONG)</scope>
    <scope>VARIANT ASN-680</scope>
    <source>
        <tissue>Adipose tissue</tissue>
    </source>
</reference>
<reference key="5">
    <citation type="submission" date="2003-10" db="EMBL/GenBank/DDBJ databases">
        <title>cDNA clones of human proteins involved in signal transduction sequenced by the Guthrie cDNA resource center (www.cdna.org).</title>
        <authorList>
            <person name="Kopatz S.A."/>
            <person name="Aronstam R.S."/>
            <person name="Sharma S.V."/>
        </authorList>
    </citation>
    <scope>NUCLEOTIDE SEQUENCE [LARGE SCALE MRNA] (ISOFORM LONG)</scope>
    <scope>VARIANTS THR-307 AND ASN-680</scope>
    <source>
        <tissue>Testis</tissue>
    </source>
</reference>
<reference key="6">
    <citation type="journal article" date="2004" name="Nat. Genet.">
        <title>Complete sequencing and characterization of 21,243 full-length human cDNAs.</title>
        <authorList>
            <person name="Ota T."/>
            <person name="Suzuki Y."/>
            <person name="Nishikawa T."/>
            <person name="Otsuki T."/>
            <person name="Sugiyama T."/>
            <person name="Irie R."/>
            <person name="Wakamatsu A."/>
            <person name="Hayashi K."/>
            <person name="Sato H."/>
            <person name="Nagai K."/>
            <person name="Kimura K."/>
            <person name="Makita H."/>
            <person name="Sekine M."/>
            <person name="Obayashi M."/>
            <person name="Nishi T."/>
            <person name="Shibahara T."/>
            <person name="Tanaka T."/>
            <person name="Ishii S."/>
            <person name="Yamamoto J."/>
            <person name="Saito K."/>
            <person name="Kawai Y."/>
            <person name="Isono Y."/>
            <person name="Nakamura Y."/>
            <person name="Nagahari K."/>
            <person name="Murakami K."/>
            <person name="Yasuda T."/>
            <person name="Iwayanagi T."/>
            <person name="Wagatsuma M."/>
            <person name="Shiratori A."/>
            <person name="Sudo H."/>
            <person name="Hosoiri T."/>
            <person name="Kaku Y."/>
            <person name="Kodaira H."/>
            <person name="Kondo H."/>
            <person name="Sugawara M."/>
            <person name="Takahashi M."/>
            <person name="Kanda K."/>
            <person name="Yokoi T."/>
            <person name="Furuya T."/>
            <person name="Kikkawa E."/>
            <person name="Omura Y."/>
            <person name="Abe K."/>
            <person name="Kamihara K."/>
            <person name="Katsuta N."/>
            <person name="Sato K."/>
            <person name="Tanikawa M."/>
            <person name="Yamazaki M."/>
            <person name="Ninomiya K."/>
            <person name="Ishibashi T."/>
            <person name="Yamashita H."/>
            <person name="Murakawa K."/>
            <person name="Fujimori K."/>
            <person name="Tanai H."/>
            <person name="Kimata M."/>
            <person name="Watanabe M."/>
            <person name="Hiraoka S."/>
            <person name="Chiba Y."/>
            <person name="Ishida S."/>
            <person name="Ono Y."/>
            <person name="Takiguchi S."/>
            <person name="Watanabe S."/>
            <person name="Yosida M."/>
            <person name="Hotuta T."/>
            <person name="Kusano J."/>
            <person name="Kanehori K."/>
            <person name="Takahashi-Fujii A."/>
            <person name="Hara H."/>
            <person name="Tanase T.-O."/>
            <person name="Nomura Y."/>
            <person name="Togiya S."/>
            <person name="Komai F."/>
            <person name="Hara R."/>
            <person name="Takeuchi K."/>
            <person name="Arita M."/>
            <person name="Imose N."/>
            <person name="Musashino K."/>
            <person name="Yuuki H."/>
            <person name="Oshima A."/>
            <person name="Sasaki N."/>
            <person name="Aotsuka S."/>
            <person name="Yoshikawa Y."/>
            <person name="Matsunawa H."/>
            <person name="Ichihara T."/>
            <person name="Shiohata N."/>
            <person name="Sano S."/>
            <person name="Moriya S."/>
            <person name="Momiyama H."/>
            <person name="Satoh N."/>
            <person name="Takami S."/>
            <person name="Terashima Y."/>
            <person name="Suzuki O."/>
            <person name="Nakagawa S."/>
            <person name="Senoh A."/>
            <person name="Mizoguchi H."/>
            <person name="Goto Y."/>
            <person name="Shimizu F."/>
            <person name="Wakebe H."/>
            <person name="Hishigaki H."/>
            <person name="Watanabe T."/>
            <person name="Sugiyama A."/>
            <person name="Takemoto M."/>
            <person name="Kawakami B."/>
            <person name="Yamazaki M."/>
            <person name="Watanabe K."/>
            <person name="Kumagai A."/>
            <person name="Itakura S."/>
            <person name="Fukuzumi Y."/>
            <person name="Fujimori Y."/>
            <person name="Komiyama M."/>
            <person name="Tashiro H."/>
            <person name="Tanigami A."/>
            <person name="Fujiwara T."/>
            <person name="Ono T."/>
            <person name="Yamada K."/>
            <person name="Fujii Y."/>
            <person name="Ozaki K."/>
            <person name="Hirao M."/>
            <person name="Ohmori Y."/>
            <person name="Kawabata A."/>
            <person name="Hikiji T."/>
            <person name="Kobatake N."/>
            <person name="Inagaki H."/>
            <person name="Ikema Y."/>
            <person name="Okamoto S."/>
            <person name="Okitani R."/>
            <person name="Kawakami T."/>
            <person name="Noguchi S."/>
            <person name="Itoh T."/>
            <person name="Shigeta K."/>
            <person name="Senba T."/>
            <person name="Matsumura K."/>
            <person name="Nakajima Y."/>
            <person name="Mizuno T."/>
            <person name="Morinaga M."/>
            <person name="Sasaki M."/>
            <person name="Togashi T."/>
            <person name="Oyama M."/>
            <person name="Hata H."/>
            <person name="Watanabe M."/>
            <person name="Komatsu T."/>
            <person name="Mizushima-Sugano J."/>
            <person name="Satoh T."/>
            <person name="Shirai Y."/>
            <person name="Takahashi Y."/>
            <person name="Nakagawa K."/>
            <person name="Okumura K."/>
            <person name="Nagase T."/>
            <person name="Nomura N."/>
            <person name="Kikuchi H."/>
            <person name="Masuho Y."/>
            <person name="Yamashita R."/>
            <person name="Nakai K."/>
            <person name="Yada T."/>
            <person name="Nakamura Y."/>
            <person name="Ohara O."/>
            <person name="Isogai T."/>
            <person name="Sugano S."/>
        </authorList>
    </citation>
    <scope>NUCLEOTIDE SEQUENCE [LARGE SCALE MRNA] (ISOFORM LONG)</scope>
    <scope>VARIANTS THR-307 AND ASN-680</scope>
    <source>
        <tissue>Testis</tissue>
    </source>
</reference>
<reference key="7">
    <citation type="journal article" date="2005" name="Nature">
        <title>Generation and annotation of the DNA sequences of human chromosomes 2 and 4.</title>
        <authorList>
            <person name="Hillier L.W."/>
            <person name="Graves T.A."/>
            <person name="Fulton R.S."/>
            <person name="Fulton L.A."/>
            <person name="Pepin K.H."/>
            <person name="Minx P."/>
            <person name="Wagner-McPherson C."/>
            <person name="Layman D."/>
            <person name="Wylie K."/>
            <person name="Sekhon M."/>
            <person name="Becker M.C."/>
            <person name="Fewell G.A."/>
            <person name="Delehaunty K.D."/>
            <person name="Miner T.L."/>
            <person name="Nash W.E."/>
            <person name="Kremitzki C."/>
            <person name="Oddy L."/>
            <person name="Du H."/>
            <person name="Sun H."/>
            <person name="Bradshaw-Cordum H."/>
            <person name="Ali J."/>
            <person name="Carter J."/>
            <person name="Cordes M."/>
            <person name="Harris A."/>
            <person name="Isak A."/>
            <person name="van Brunt A."/>
            <person name="Nguyen C."/>
            <person name="Du F."/>
            <person name="Courtney L."/>
            <person name="Kalicki J."/>
            <person name="Ozersky P."/>
            <person name="Abbott S."/>
            <person name="Armstrong J."/>
            <person name="Belter E.A."/>
            <person name="Caruso L."/>
            <person name="Cedroni M."/>
            <person name="Cotton M."/>
            <person name="Davidson T."/>
            <person name="Desai A."/>
            <person name="Elliott G."/>
            <person name="Erb T."/>
            <person name="Fronick C."/>
            <person name="Gaige T."/>
            <person name="Haakenson W."/>
            <person name="Haglund K."/>
            <person name="Holmes A."/>
            <person name="Harkins R."/>
            <person name="Kim K."/>
            <person name="Kruchowski S.S."/>
            <person name="Strong C.M."/>
            <person name="Grewal N."/>
            <person name="Goyea E."/>
            <person name="Hou S."/>
            <person name="Levy A."/>
            <person name="Martinka S."/>
            <person name="Mead K."/>
            <person name="McLellan M.D."/>
            <person name="Meyer R."/>
            <person name="Randall-Maher J."/>
            <person name="Tomlinson C."/>
            <person name="Dauphin-Kohlberg S."/>
            <person name="Kozlowicz-Reilly A."/>
            <person name="Shah N."/>
            <person name="Swearengen-Shahid S."/>
            <person name="Snider J."/>
            <person name="Strong J.T."/>
            <person name="Thompson J."/>
            <person name="Yoakum M."/>
            <person name="Leonard S."/>
            <person name="Pearman C."/>
            <person name="Trani L."/>
            <person name="Radionenko M."/>
            <person name="Waligorski J.E."/>
            <person name="Wang C."/>
            <person name="Rock S.M."/>
            <person name="Tin-Wollam A.-M."/>
            <person name="Maupin R."/>
            <person name="Latreille P."/>
            <person name="Wendl M.C."/>
            <person name="Yang S.-P."/>
            <person name="Pohl C."/>
            <person name="Wallis J.W."/>
            <person name="Spieth J."/>
            <person name="Bieri T.A."/>
            <person name="Berkowicz N."/>
            <person name="Nelson J.O."/>
            <person name="Osborne J."/>
            <person name="Ding L."/>
            <person name="Meyer R."/>
            <person name="Sabo A."/>
            <person name="Shotland Y."/>
            <person name="Sinha P."/>
            <person name="Wohldmann P.E."/>
            <person name="Cook L.L."/>
            <person name="Hickenbotham M.T."/>
            <person name="Eldred J."/>
            <person name="Williams D."/>
            <person name="Jones T.A."/>
            <person name="She X."/>
            <person name="Ciccarelli F.D."/>
            <person name="Izaurralde E."/>
            <person name="Taylor J."/>
            <person name="Schmutz J."/>
            <person name="Myers R.M."/>
            <person name="Cox D.R."/>
            <person name="Huang X."/>
            <person name="McPherson J.D."/>
            <person name="Mardis E.R."/>
            <person name="Clifton S.W."/>
            <person name="Warren W.C."/>
            <person name="Chinwalla A.T."/>
            <person name="Eddy S.R."/>
            <person name="Marra M.A."/>
            <person name="Ovcharenko I."/>
            <person name="Furey T.S."/>
            <person name="Miller W."/>
            <person name="Eichler E.E."/>
            <person name="Bork P."/>
            <person name="Suyama M."/>
            <person name="Torrents D."/>
            <person name="Waterston R.H."/>
            <person name="Wilson R.K."/>
        </authorList>
    </citation>
    <scope>NUCLEOTIDE SEQUENCE [LARGE SCALE GENOMIC DNA]</scope>
</reference>
<reference key="8">
    <citation type="submission" date="2005-09" db="EMBL/GenBank/DDBJ databases">
        <authorList>
            <person name="Mural R.J."/>
            <person name="Istrail S."/>
            <person name="Sutton G."/>
            <person name="Florea L."/>
            <person name="Halpern A.L."/>
            <person name="Mobarry C.M."/>
            <person name="Lippert R."/>
            <person name="Walenz B."/>
            <person name="Shatkay H."/>
            <person name="Dew I."/>
            <person name="Miller J.R."/>
            <person name="Flanigan M.J."/>
            <person name="Edwards N.J."/>
            <person name="Bolanos R."/>
            <person name="Fasulo D."/>
            <person name="Halldorsson B.V."/>
            <person name="Hannenhalli S."/>
            <person name="Turner R."/>
            <person name="Yooseph S."/>
            <person name="Lu F."/>
            <person name="Nusskern D.R."/>
            <person name="Shue B.C."/>
            <person name="Zheng X.H."/>
            <person name="Zhong F."/>
            <person name="Delcher A.L."/>
            <person name="Huson D.H."/>
            <person name="Kravitz S.A."/>
            <person name="Mouchard L."/>
            <person name="Reinert K."/>
            <person name="Remington K.A."/>
            <person name="Clark A.G."/>
            <person name="Waterman M.S."/>
            <person name="Eichler E.E."/>
            <person name="Adams M.D."/>
            <person name="Hunkapiller M.W."/>
            <person name="Myers E.W."/>
            <person name="Venter J.C."/>
        </authorList>
    </citation>
    <scope>NUCLEOTIDE SEQUENCE [LARGE SCALE GENOMIC DNA]</scope>
</reference>
<reference key="9">
    <citation type="journal article" date="2004" name="Genome Res.">
        <title>The status, quality, and expansion of the NIH full-length cDNA project: the Mammalian Gene Collection (MGC).</title>
        <authorList>
            <consortium name="The MGC Project Team"/>
        </authorList>
    </citation>
    <scope>NUCLEOTIDE SEQUENCE [LARGE SCALE MRNA] (ISOFORMS LONG AND 3)</scope>
    <scope>VARIANTS THR-307 AND ASN-680</scope>
</reference>
<reference key="10">
    <citation type="journal article" date="1992" name="Biochem. Biophys. Res. Commun.">
        <title>Molecular cloning of a truncated isoform of the human follicle stimulating hormone receptor.</title>
        <authorList>
            <person name="Gromoll J."/>
            <person name="Gudermann T."/>
            <person name="Nieschlag E."/>
        </authorList>
    </citation>
    <scope>NUCLEOTIDE SEQUENCE [MRNA] OF 1-342 (ISOFORM SHORT)</scope>
    <scope>VARIANT THR-307</scope>
    <source>
        <tissue>Testis</tissue>
    </source>
</reference>
<reference key="11">
    <citation type="journal article" date="1994" name="Mol. Cell. Endocrinol.">
        <title>Characterization of the 5' flanking region of the human follicle-stimulating hormone receptor gene.</title>
        <authorList>
            <person name="Gromoll J."/>
            <person name="Dankbar B."/>
            <person name="Gudermann T."/>
        </authorList>
    </citation>
    <scope>NUCLEOTIDE SEQUENCE [GENOMIC DNA] OF 1-51</scope>
</reference>
<reference key="12">
    <citation type="journal article" date="1994" name="J. Mol. Endocrinol.">
        <title>Localization of the human FSH receptor to chromosome 2p21 using a genomic probe comprising exon 10.</title>
        <authorList>
            <person name="Gromoll J."/>
            <person name="Ried T."/>
            <person name="Holtgreve-Grez H."/>
            <person name="Nieschlag E."/>
            <person name="Gudermann T."/>
        </authorList>
    </citation>
    <scope>NUCLEOTIDE SEQUENCE [GENOMIC DNA] OF 286-695</scope>
    <scope>VARIANT THR-307</scope>
</reference>
<reference key="13">
    <citation type="journal article" date="2002" name="EMBO J.">
        <title>Tyrosine sulfation is required for agonist recognition by glycoprotein hormone receptors.</title>
        <authorList>
            <person name="Costagliola S."/>
            <person name="Panneels V."/>
            <person name="Bonomi M."/>
            <person name="Koch J."/>
            <person name="Many M.C."/>
            <person name="Smits G."/>
            <person name="Vassart G."/>
        </authorList>
    </citation>
    <scope>FUNCTION</scope>
    <scope>SUBCELLULAR LOCATION</scope>
    <scope>SULFATION AT TYR-335</scope>
    <scope>MUTAGENESIS OF TYR-330 AND TYR-335</scope>
</reference>
<reference key="14">
    <citation type="journal article" date="2002" name="Fertil. Steril.">
        <title>Alternatively spliced variants of the follicle-stimulating hormone receptor gene in the testis of infertile men.</title>
        <authorList>
            <person name="Song G.J."/>
            <person name="Park Y.S."/>
            <person name="Lee Y.S."/>
            <person name="Lee C.C."/>
            <person name="Kang I.S."/>
        </authorList>
    </citation>
    <scope>ALTERNATIVE SPLICING (ISOFORM 4)</scope>
</reference>
<reference key="15">
    <citation type="journal article" date="2007" name="Mol. Cell. Endocrinol.">
        <title>APPL1, APPL2, Akt2 and FOXO1a interact with FSHR in a potential signaling complex.</title>
        <authorList>
            <person name="Nechamen C.A."/>
            <person name="Thomas R.M."/>
            <person name="Dias J.A."/>
        </authorList>
    </citation>
    <scope>INTERACTION WITH APPL2</scope>
</reference>
<reference key="16">
    <citation type="journal article" date="1995" name="Structure">
        <title>Structural predictions for the ligand-binding region of glycoprotein hormone receptors and the nature of hormone-receptor interactions.</title>
        <authorList>
            <person name="Jiang X."/>
            <person name="Dreano M."/>
            <person name="Buckler D.R."/>
            <person name="Cheng S."/>
            <person name="Ythier A."/>
            <person name="Wu H."/>
            <person name="Hendrickson W.A."/>
            <person name="el Tayar N."/>
        </authorList>
    </citation>
    <scope>3D-STRUCTURE MODELING OF 49-228</scope>
</reference>
<reference key="17">
    <citation type="journal article" date="2005" name="Nature">
        <title>Structure of human follicle-stimulating hormone in complex with its receptor.</title>
        <authorList>
            <person name="Fan Q.R."/>
            <person name="Hendrickson W.A."/>
        </authorList>
    </citation>
    <scope>X-RAY CRYSTALLOGRAPHY (2.92 ANGSTROMS) OF 17-268 IN COMPLEX WITH FSHA AND FSHB</scope>
    <scope>DISULFIDE BONDS</scope>
    <scope>GLYCOSYLATION AT ASN-191</scope>
</reference>
<reference evidence="39" key="18">
    <citation type="journal article" date="2014" name="J. Biol. Chem.">
        <title>Evidence for follicle-stimulating hormone receptor as a functional trimer.</title>
        <authorList>
            <person name="Jiang X."/>
            <person name="Fischer D."/>
            <person name="Chen X."/>
            <person name="McKenna S.D."/>
            <person name="Liu H."/>
            <person name="Sriraman V."/>
            <person name="Yu H.N."/>
            <person name="Goutopoulos A."/>
            <person name="Arkinstall S."/>
            <person name="He X."/>
        </authorList>
    </citation>
    <scope>X-RAY CRYSTALLOGRAPHY (2.90 ANGSTROMS) OF 16-366 OF HOMOTRIMER IN COMPLEX WITH CGA AND FSHB</scope>
    <scope>FUNCTION</scope>
    <scope>SUBCELLULAR LOCATION</scope>
    <scope>GLYCOSYLATION AT ASN-191</scope>
    <scope>DISULFIDE BONDS</scope>
</reference>
<reference key="19">
    <citation type="journal article" date="1995" name="Cell">
        <title>Mutation in the follicle-stimulating hormone receptor gene causes hereditary hypergonadotropic ovarian failure.</title>
        <authorList>
            <person name="Aittomaeki K."/>
            <person name="Lucena J.L.D."/>
            <person name="Pakarinen P."/>
            <person name="Sistonen P."/>
            <person name="Tapanainen J."/>
            <person name="Gromoll J."/>
            <person name="Kaskikari R."/>
            <person name="Sankila E.-M."/>
            <person name="Lehvaslaiho H."/>
            <person name="Engel A.R."/>
            <person name="Nieschlag E."/>
            <person name="Huhtaniemi I."/>
            <person name="de la Chapelle A."/>
        </authorList>
    </citation>
    <scope>VARIANT ODG1 VAL-189</scope>
</reference>
<reference key="20">
    <citation type="journal article" date="1997" name="J. Clin. Endocrinol. Metab.">
        <title>A mutation in the follicle-stimulating hormone receptor occurs frequently in human ovarian sex cord tumors.</title>
        <authorList>
            <person name="Kotlar T.J."/>
            <person name="Young R.H."/>
            <person name="Albanese C."/>
            <person name="Crowley W.F. Jr."/>
            <person name="Scully R.E."/>
            <person name="Jameson J.L."/>
        </authorList>
    </citation>
    <scope>VARIANT OVARIAN SEX CORD TUMOR SER-591</scope>
</reference>
<reference key="21">
    <citation type="journal article" date="1996" name="J. Clin. Endocrinol. Metab.">
        <title>An activating mutation of the follicle-stimulating hormone receptor autonomously sustains spermatogenesis in a hypophysectomized man.</title>
        <authorList>
            <person name="Gromoll J."/>
            <person name="Simoni M."/>
            <person name="Nieschlag E."/>
        </authorList>
    </citation>
    <scope>VARIANT FSHR ACTIVATION GLY-567</scope>
    <scope>CHARACTERIZATION OF VARIANT FSHR ACTIVATION GLY-567</scope>
</reference>
<reference key="22">
    <citation type="journal article" date="1998" name="J. Clin. Endocrinol. Metab.">
        <title>The frequency of an inactivating point mutation (566C--&gt;T) of the human follicle-stimulating hormone receptor gene in four populations using allele-specific hybridization and time-resolved fluorometry.</title>
        <authorList>
            <person name="Jiang M."/>
            <person name="Aittomaeki K."/>
            <person name="Nilsson C."/>
            <person name="Pakarinen P."/>
            <person name="Iitia A."/>
            <person name="Torresani T."/>
            <person name="Simonsen H."/>
            <person name="Goh V."/>
            <person name="Pettersson K."/>
            <person name="de la Chapelle A."/>
            <person name="Huhtaniemi I."/>
        </authorList>
    </citation>
    <scope>VARIANT ODG1 VAL-189</scope>
</reference>
<reference key="23">
    <citation type="journal article" date="1998" name="J. Clin. Invest.">
        <title>A novel phenotype related to partial loss of function mutations of the follicle stimulating hormone receptor.</title>
        <authorList>
            <person name="Beau I."/>
            <person name="Touraine P."/>
            <person name="Meduri G."/>
            <person name="Gougeon A."/>
            <person name="Desroches A."/>
            <person name="Matuchansky C."/>
            <person name="Milgrom E."/>
            <person name="Kuttenn F."/>
            <person name="Misrahi M."/>
        </authorList>
    </citation>
    <scope>VARIANTS ODG1 THR-160 AND CYS-573</scope>
</reference>
<reference key="24">
    <citation type="journal article" date="1999" name="Mol. Endocrinol.">
        <title>New natural inactivating mutations of the follicle-stimulating hormone receptor: correlations between receptor function and phenotype.</title>
        <authorList>
            <person name="Touraine P."/>
            <person name="Beau I."/>
            <person name="Gougeon A."/>
            <person name="Meduri G."/>
            <person name="Desroches A."/>
            <person name="Pichard C."/>
            <person name="Detoeuf M."/>
            <person name="Paniel B."/>
            <person name="Prieur M."/>
            <person name="Zorn J.-R."/>
            <person name="Milgrom E."/>
            <person name="Kuttenn F."/>
            <person name="Misrahi M."/>
        </authorList>
    </citation>
    <scope>VARIANTS ODG1 VAL-224 AND VAL-601</scope>
    <scope>CHARACTERIZATION OF VARIANTS ODG1 VAL-224; CYS-573 AND VAL-601</scope>
</reference>
<reference key="25">
    <citation type="journal article" date="1999" name="Nat. Genet.">
        <title>Characterization of single-nucleotide polymorphisms in coding regions of human genes.</title>
        <authorList>
            <person name="Cargill M."/>
            <person name="Altshuler D."/>
            <person name="Ireland J."/>
            <person name="Sklar P."/>
            <person name="Ardlie K."/>
            <person name="Patil N."/>
            <person name="Shaw N."/>
            <person name="Lane C.R."/>
            <person name="Lim E.P."/>
            <person name="Kalyanaraman N."/>
            <person name="Nemesh J."/>
            <person name="Ziaugra L."/>
            <person name="Friedland L."/>
            <person name="Rolfe A."/>
            <person name="Warrington J."/>
            <person name="Lipshutz R."/>
            <person name="Daley G.Q."/>
            <person name="Lander E.S."/>
        </authorList>
    </citation>
    <scope>VARIANTS THR-307; ARG-524 AND ASN-680</scope>
</reference>
<reference key="26">
    <citation type="journal article" date="1999" name="Nat. Genet.">
        <authorList>
            <person name="Cargill M."/>
            <person name="Altshuler D."/>
            <person name="Ireland J."/>
            <person name="Sklar P."/>
            <person name="Ardlie K."/>
            <person name="Patil N."/>
            <person name="Shaw N."/>
            <person name="Lane C.R."/>
            <person name="Lim E.P."/>
            <person name="Kalyanaraman N."/>
            <person name="Nemesh J."/>
            <person name="Ziaugra L."/>
            <person name="Friedland L."/>
            <person name="Rolfe A."/>
            <person name="Warrington J."/>
            <person name="Lipshutz R."/>
            <person name="Daley G.Q."/>
            <person name="Lander E.S."/>
        </authorList>
    </citation>
    <scope>ERRATUM OF PUBMED:10391209</scope>
</reference>
<reference key="27">
    <citation type="journal article" date="2002" name="Andrologia">
        <title>Distribution and function of FSH receptor genetic variants in normal men.</title>
        <authorList>
            <person name="Asatiani K."/>
            <person name="Gromoll J."/>
            <person name="Eckardstein S.V."/>
            <person name="Zitzmann M."/>
            <person name="Nieschlag E."/>
            <person name="Simoni M."/>
        </authorList>
    </citation>
    <scope>VARIANTS THR-307 AND ASN-680</scope>
</reference>
<reference key="28">
    <citation type="journal article" date="2002" name="J. Clin. Endocrinol. Metab.">
        <title>A novel mutation in the FSH receptor inhibiting signal transduction and causing primary ovarian failure.</title>
        <authorList>
            <person name="Doherty E."/>
            <person name="Pakarinen P."/>
            <person name="Tiitinen A."/>
            <person name="Kiilavuori A."/>
            <person name="Huhtaniemi I."/>
            <person name="Forrest S."/>
            <person name="Aittomaeki K."/>
        </authorList>
    </citation>
    <scope>VARIANT ODG1 THR-419</scope>
    <scope>CHARACTERIZATION OF VARIANT ODG1 THR-419</scope>
</reference>
<reference key="29">
    <citation type="journal article" date="2003" name="Hum. Reprod.">
        <title>A novel loss of function mutation in exon 10 of the FSH receptor gene causing hypergonadotrophic hypogonadism: clinical and molecular characteristics.</title>
        <authorList>
            <person name="Allen L.A."/>
            <person name="Achermann J.C."/>
            <person name="Pakarinen P."/>
            <person name="Kotlar T.J."/>
            <person name="Huhtaniemi I.T."/>
            <person name="Jameson J.L."/>
            <person name="Cheetham T.D."/>
            <person name="Ball S.G."/>
        </authorList>
    </citation>
    <scope>VARIANT ODG1 ARG-348</scope>
</reference>
<reference key="30">
    <citation type="journal article" date="2003" name="J. Clin. Endocrinol. Metab.">
        <title>Delayed puberty and primary amenorrhea associated with a novel mutation of the human follicle-stimulating hormone receptor: clinical, histological, and molecular studies.</title>
        <authorList>
            <person name="Meduri G."/>
            <person name="Touraine P."/>
            <person name="Beau I."/>
            <person name="Lahuna O."/>
            <person name="Desroches A."/>
            <person name="Vacher-Lavenu M.C."/>
            <person name="Kuttenn F."/>
            <person name="Misrahi M."/>
        </authorList>
    </citation>
    <scope>VARIANT ODG1 THR-519</scope>
    <scope>CHARACTERIZATION OF VARIANT ODG1 THR-519</scope>
</reference>
<reference key="31">
    <citation type="journal article" date="2003" name="N. Engl. J. Med.">
        <title>A chorionic gonadotropin-sensitive mutation in the follicle-stimulating hormone receptor as a cause of familial gestational spontaneous ovarian hyperstimulation syndrome.</title>
        <authorList>
            <person name="Vasseur C."/>
            <person name="Rodien P."/>
            <person name="Beau I."/>
            <person name="Desroches A."/>
            <person name="Gerard C."/>
            <person name="de Poncheville L."/>
            <person name="Chaplot S."/>
            <person name="Savagner F."/>
            <person name="Croue A."/>
            <person name="Mathieu E."/>
            <person name="Lahlou N."/>
            <person name="Descamps P."/>
            <person name="Misrahi M."/>
        </authorList>
    </citation>
    <scope>VARIANT OHSS ILE-449</scope>
</reference>
<reference key="32">
    <citation type="journal article" date="2003" name="N. Engl. J. Med.">
        <title>Ovarian hyperstimulation syndrome due to a mutation in the follicle-stimulating hormone receptor.</title>
        <authorList>
            <person name="Smits G."/>
            <person name="Olatunbosun O."/>
            <person name="Delbaere A."/>
            <person name="Pierson R."/>
            <person name="Vassart G."/>
            <person name="Costagliola S."/>
        </authorList>
    </citation>
    <scope>VARIANT OHSS ASN-567</scope>
</reference>
<reference key="33">
    <citation type="journal article" date="2004" name="J. Clin. Endocrinol. Metab.">
        <title>A mutation in the follicle-stimulating hormone receptor as a cause of familial spontaneous ovarian hyperstimulation syndrome.</title>
        <authorList>
            <person name="Montanelli L."/>
            <person name="Delbaere A."/>
            <person name="Di Carlo C."/>
            <person name="Nappi C."/>
            <person name="Smits G."/>
            <person name="Vassart G."/>
            <person name="Costagliola S."/>
        </authorList>
    </citation>
    <scope>VARIANT OHSS ALA-449</scope>
    <scope>CHARACTERIZATION OF VARIANT OHSS ALA-449</scope>
</reference>
<reference key="34">
    <citation type="journal article" date="2006" name="J. Clin. Endocrinol. Metab.">
        <title>Presence and absence of follicle-stimulating hormone receptor mutations provide some insights into spontaneous ovarian hyperstimulation syndrome physiopathology.</title>
        <authorList>
            <person name="De Leener A."/>
            <person name="Montanelli L."/>
            <person name="Van Durme J."/>
            <person name="Chae H."/>
            <person name="Smits G."/>
            <person name="Vassart G."/>
            <person name="Costagliola S."/>
        </authorList>
    </citation>
    <scope>VARIANT OHSS THR-545</scope>
    <scope>CHARACTERIZATION OF VARIANT OHSS THR-545</scope>
</reference>
<reference key="35">
    <citation type="journal article" date="2008" name="Hum. Mutat.">
        <title>Identification of the first germline mutation in the extracellular domain of the follitropin receptor responsible for spontaneous ovarian hyperstimulation syndrome.</title>
        <authorList>
            <person name="De Leener A."/>
            <person name="Caltabiano G."/>
            <person name="Erkan S."/>
            <person name="Idil M."/>
            <person name="Vassart G."/>
            <person name="Pardo L."/>
            <person name="Costagliola S."/>
        </authorList>
    </citation>
    <scope>VARIANT OHSS TYR-128</scope>
    <scope>CHARACTERIZATION OF VARIANT OHSS TYR-128</scope>
</reference>
<reference key="36">
    <citation type="journal article" date="2013" name="PLoS ONE">
        <title>Molecular analysis of a mutated FSH receptor detected in a patient with spontaneous ovarian hyperstimulation syndrome.</title>
        <authorList>
            <person name="Uchida S."/>
            <person name="Uchida H."/>
            <person name="Maruyama T."/>
            <person name="Kajitani T."/>
            <person name="Oda H."/>
            <person name="Miyazaki K."/>
            <person name="Kagami M."/>
            <person name="Yoshimura Y."/>
        </authorList>
    </citation>
    <scope>VARIANT OHSS ILE-512</scope>
    <scope>CHARACTERIZATION OF VARIANT OHSS ILE-512</scope>
    <scope>FUNCTION</scope>
</reference>
<reference key="37">
    <citation type="journal article" date="2015" name="J. Clin. Endocrinol. Metab.">
        <title>Functional characterization of two naturally occurring mutations (Val514Ala and Ala575Val) in follicle-stimulating hormone receptor.</title>
        <authorList>
            <person name="Desai S.S."/>
            <person name="Achrekar S.K."/>
            <person name="Sahasrabuddhe K.A."/>
            <person name="Meharji P.K."/>
            <person name="Desai S.K."/>
            <person name="Mangoli V.S."/>
            <person name="Mahale S.D."/>
        </authorList>
    </citation>
    <scope>VARIANTS OHSS ALA-514 AND VAL-575</scope>
    <scope>CHARACTERIZATION OF VARIANTS OHSS ALA-514 AND VAL-575</scope>
</reference>
<organism>
    <name type="scientific">Homo sapiens</name>
    <name type="common">Human</name>
    <dbReference type="NCBI Taxonomy" id="9606"/>
    <lineage>
        <taxon>Eukaryota</taxon>
        <taxon>Metazoa</taxon>
        <taxon>Chordata</taxon>
        <taxon>Craniata</taxon>
        <taxon>Vertebrata</taxon>
        <taxon>Euteleostomi</taxon>
        <taxon>Mammalia</taxon>
        <taxon>Eutheria</taxon>
        <taxon>Euarchontoglires</taxon>
        <taxon>Primates</taxon>
        <taxon>Haplorrhini</taxon>
        <taxon>Catarrhini</taxon>
        <taxon>Hominidae</taxon>
        <taxon>Homo</taxon>
    </lineage>
</organism>